<evidence type="ECO:0000255" key="1">
    <source>
        <dbReference type="HAMAP-Rule" id="MF_00179"/>
    </source>
</evidence>
<protein>
    <recommendedName>
        <fullName evidence="1">GTP cyclohydrolase-2</fullName>
        <ecNumber evidence="1">3.5.4.25</ecNumber>
    </recommendedName>
    <alternativeName>
        <fullName evidence="1">GTP cyclohydrolase II</fullName>
    </alternativeName>
</protein>
<organism>
    <name type="scientific">Pseudomonas paraeruginosa (strain DSM 24068 / PA7)</name>
    <name type="common">Pseudomonas aeruginosa (strain PA7)</name>
    <dbReference type="NCBI Taxonomy" id="381754"/>
    <lineage>
        <taxon>Bacteria</taxon>
        <taxon>Pseudomonadati</taxon>
        <taxon>Pseudomonadota</taxon>
        <taxon>Gammaproteobacteria</taxon>
        <taxon>Pseudomonadales</taxon>
        <taxon>Pseudomonadaceae</taxon>
        <taxon>Pseudomonas</taxon>
        <taxon>Pseudomonas paraeruginosa</taxon>
    </lineage>
</organism>
<reference key="1">
    <citation type="submission" date="2007-06" db="EMBL/GenBank/DDBJ databases">
        <authorList>
            <person name="Dodson R.J."/>
            <person name="Harkins D."/>
            <person name="Paulsen I.T."/>
        </authorList>
    </citation>
    <scope>NUCLEOTIDE SEQUENCE [LARGE SCALE GENOMIC DNA]</scope>
    <source>
        <strain>DSM 24068 / PA7</strain>
    </source>
</reference>
<name>RIBA_PSEP7</name>
<keyword id="KW-0342">GTP-binding</keyword>
<keyword id="KW-0378">Hydrolase</keyword>
<keyword id="KW-0479">Metal-binding</keyword>
<keyword id="KW-0547">Nucleotide-binding</keyword>
<keyword id="KW-0686">Riboflavin biosynthesis</keyword>
<keyword id="KW-0862">Zinc</keyword>
<gene>
    <name evidence="1" type="primary">ribA</name>
    <name type="ordered locus">PSPA7_1054</name>
</gene>
<feature type="chain" id="PRO_1000040572" description="GTP cyclohydrolase-2">
    <location>
        <begin position="1"/>
        <end position="205"/>
    </location>
</feature>
<feature type="active site" description="Proton acceptor" evidence="1">
    <location>
        <position position="126"/>
    </location>
</feature>
<feature type="active site" description="Nucleophile" evidence="1">
    <location>
        <position position="128"/>
    </location>
</feature>
<feature type="binding site" evidence="1">
    <location>
        <begin position="49"/>
        <end position="53"/>
    </location>
    <ligand>
        <name>GTP</name>
        <dbReference type="ChEBI" id="CHEBI:37565"/>
    </ligand>
</feature>
<feature type="binding site" evidence="1">
    <location>
        <position position="54"/>
    </location>
    <ligand>
        <name>Zn(2+)</name>
        <dbReference type="ChEBI" id="CHEBI:29105"/>
        <note>catalytic</note>
    </ligand>
</feature>
<feature type="binding site" evidence="1">
    <location>
        <position position="65"/>
    </location>
    <ligand>
        <name>Zn(2+)</name>
        <dbReference type="ChEBI" id="CHEBI:29105"/>
        <note>catalytic</note>
    </ligand>
</feature>
<feature type="binding site" evidence="1">
    <location>
        <position position="67"/>
    </location>
    <ligand>
        <name>Zn(2+)</name>
        <dbReference type="ChEBI" id="CHEBI:29105"/>
        <note>catalytic</note>
    </ligand>
</feature>
<feature type="binding site" evidence="1">
    <location>
        <position position="70"/>
    </location>
    <ligand>
        <name>GTP</name>
        <dbReference type="ChEBI" id="CHEBI:37565"/>
    </ligand>
</feature>
<feature type="binding site" evidence="1">
    <location>
        <begin position="92"/>
        <end position="94"/>
    </location>
    <ligand>
        <name>GTP</name>
        <dbReference type="ChEBI" id="CHEBI:37565"/>
    </ligand>
</feature>
<feature type="binding site" evidence="1">
    <location>
        <position position="114"/>
    </location>
    <ligand>
        <name>GTP</name>
        <dbReference type="ChEBI" id="CHEBI:37565"/>
    </ligand>
</feature>
<feature type="binding site" evidence="1">
    <location>
        <position position="149"/>
    </location>
    <ligand>
        <name>GTP</name>
        <dbReference type="ChEBI" id="CHEBI:37565"/>
    </ligand>
</feature>
<feature type="binding site" evidence="1">
    <location>
        <position position="154"/>
    </location>
    <ligand>
        <name>GTP</name>
        <dbReference type="ChEBI" id="CHEBI:37565"/>
    </ligand>
</feature>
<sequence>MSVVFVAASKLPTPFGEFTMHGFLDEESGKEHVALTMGDIADGAPVLGRLHSECLTGDALFSLRCDCGFQLEGALAAIAEEGRGVLLYLRQEGRGIGLLNKIRAYELQDGGADTVEANLQLGFGADQRDYAMCQPMLAHLGVSSLRLMTNNPRKVKALESYAVTVAERVPLQKGLNKHNRRYLATKAGKLGHMLGSLHQGEAETT</sequence>
<comment type="function">
    <text evidence="1">Catalyzes the conversion of GTP to 2,5-diamino-6-ribosylamino-4(3H)-pyrimidinone 5'-phosphate (DARP), formate and pyrophosphate.</text>
</comment>
<comment type="catalytic activity">
    <reaction evidence="1">
        <text>GTP + 4 H2O = 2,5-diamino-6-hydroxy-4-(5-phosphoribosylamino)-pyrimidine + formate + 2 phosphate + 3 H(+)</text>
        <dbReference type="Rhea" id="RHEA:23704"/>
        <dbReference type="ChEBI" id="CHEBI:15377"/>
        <dbReference type="ChEBI" id="CHEBI:15378"/>
        <dbReference type="ChEBI" id="CHEBI:15740"/>
        <dbReference type="ChEBI" id="CHEBI:37565"/>
        <dbReference type="ChEBI" id="CHEBI:43474"/>
        <dbReference type="ChEBI" id="CHEBI:58614"/>
        <dbReference type="EC" id="3.5.4.25"/>
    </reaction>
</comment>
<comment type="cofactor">
    <cofactor evidence="1">
        <name>Zn(2+)</name>
        <dbReference type="ChEBI" id="CHEBI:29105"/>
    </cofactor>
    <text evidence="1">Binds 1 zinc ion per subunit.</text>
</comment>
<comment type="pathway">
    <text evidence="1">Cofactor biosynthesis; riboflavin biosynthesis; 5-amino-6-(D-ribitylamino)uracil from GTP: step 1/4.</text>
</comment>
<comment type="similarity">
    <text evidence="1">Belongs to the GTP cyclohydrolase II family.</text>
</comment>
<proteinExistence type="inferred from homology"/>
<dbReference type="EC" id="3.5.4.25" evidence="1"/>
<dbReference type="EMBL" id="CP000744">
    <property type="protein sequence ID" value="ABR80773.1"/>
    <property type="molecule type" value="Genomic_DNA"/>
</dbReference>
<dbReference type="RefSeq" id="WP_012074386.1">
    <property type="nucleotide sequence ID" value="NC_009656.1"/>
</dbReference>
<dbReference type="SMR" id="A6V055"/>
<dbReference type="GeneID" id="77219402"/>
<dbReference type="KEGG" id="pap:PSPA7_1054"/>
<dbReference type="HOGENOM" id="CLU_020273_2_1_6"/>
<dbReference type="UniPathway" id="UPA00275">
    <property type="reaction ID" value="UER00400"/>
</dbReference>
<dbReference type="Proteomes" id="UP000001582">
    <property type="component" value="Chromosome"/>
</dbReference>
<dbReference type="GO" id="GO:0005829">
    <property type="term" value="C:cytosol"/>
    <property type="evidence" value="ECO:0007669"/>
    <property type="project" value="TreeGrafter"/>
</dbReference>
<dbReference type="GO" id="GO:0005525">
    <property type="term" value="F:GTP binding"/>
    <property type="evidence" value="ECO:0007669"/>
    <property type="project" value="UniProtKB-KW"/>
</dbReference>
<dbReference type="GO" id="GO:0003935">
    <property type="term" value="F:GTP cyclohydrolase II activity"/>
    <property type="evidence" value="ECO:0007669"/>
    <property type="project" value="UniProtKB-UniRule"/>
</dbReference>
<dbReference type="GO" id="GO:0008270">
    <property type="term" value="F:zinc ion binding"/>
    <property type="evidence" value="ECO:0007669"/>
    <property type="project" value="UniProtKB-UniRule"/>
</dbReference>
<dbReference type="GO" id="GO:0009231">
    <property type="term" value="P:riboflavin biosynthetic process"/>
    <property type="evidence" value="ECO:0007669"/>
    <property type="project" value="UniProtKB-UniRule"/>
</dbReference>
<dbReference type="CDD" id="cd00641">
    <property type="entry name" value="GTP_cyclohydro2"/>
    <property type="match status" value="1"/>
</dbReference>
<dbReference type="FunFam" id="3.40.50.10990:FF:000002">
    <property type="entry name" value="GTP cyclohydrolase-2"/>
    <property type="match status" value="1"/>
</dbReference>
<dbReference type="Gene3D" id="3.40.50.10990">
    <property type="entry name" value="GTP cyclohydrolase II"/>
    <property type="match status" value="1"/>
</dbReference>
<dbReference type="HAMAP" id="MF_00179">
    <property type="entry name" value="RibA"/>
    <property type="match status" value="1"/>
</dbReference>
<dbReference type="InterPro" id="IPR032677">
    <property type="entry name" value="GTP_cyclohydro_II"/>
</dbReference>
<dbReference type="InterPro" id="IPR000926">
    <property type="entry name" value="RibA"/>
</dbReference>
<dbReference type="InterPro" id="IPR036144">
    <property type="entry name" value="RibA-like_sf"/>
</dbReference>
<dbReference type="NCBIfam" id="NF001591">
    <property type="entry name" value="PRK00393.1"/>
    <property type="match status" value="1"/>
</dbReference>
<dbReference type="NCBIfam" id="TIGR00505">
    <property type="entry name" value="ribA"/>
    <property type="match status" value="1"/>
</dbReference>
<dbReference type="PANTHER" id="PTHR21327:SF18">
    <property type="entry name" value="3,4-DIHYDROXY-2-BUTANONE 4-PHOSPHATE SYNTHASE"/>
    <property type="match status" value="1"/>
</dbReference>
<dbReference type="PANTHER" id="PTHR21327">
    <property type="entry name" value="GTP CYCLOHYDROLASE II-RELATED"/>
    <property type="match status" value="1"/>
</dbReference>
<dbReference type="Pfam" id="PF00925">
    <property type="entry name" value="GTP_cyclohydro2"/>
    <property type="match status" value="1"/>
</dbReference>
<dbReference type="SUPFAM" id="SSF142695">
    <property type="entry name" value="RibA-like"/>
    <property type="match status" value="1"/>
</dbReference>
<accession>A6V055</accession>